<name>RS20_RHIE6</name>
<sequence length="92" mass="9791">MANTTSAKKATRKIARRTDVNKARRSRVRTFVRQVEEAIASGDADKAKAAFLAAQPELARAASKGVLHSNTASRKVSRLAARVKALSVSATA</sequence>
<keyword id="KW-0687">Ribonucleoprotein</keyword>
<keyword id="KW-0689">Ribosomal protein</keyword>
<keyword id="KW-0694">RNA-binding</keyword>
<keyword id="KW-0699">rRNA-binding</keyword>
<proteinExistence type="inferred from homology"/>
<protein>
    <recommendedName>
        <fullName evidence="1">Small ribosomal subunit protein bS20</fullName>
    </recommendedName>
    <alternativeName>
        <fullName evidence="3">30S ribosomal protein S20</fullName>
    </alternativeName>
</protein>
<feature type="chain" id="PRO_1000126500" description="Small ribosomal subunit protein bS20">
    <location>
        <begin position="1"/>
        <end position="92"/>
    </location>
</feature>
<feature type="region of interest" description="Disordered" evidence="2">
    <location>
        <begin position="1"/>
        <end position="23"/>
    </location>
</feature>
<comment type="function">
    <text evidence="1">Binds directly to 16S ribosomal RNA.</text>
</comment>
<comment type="similarity">
    <text evidence="1">Belongs to the bacterial ribosomal protein bS20 family.</text>
</comment>
<reference key="1">
    <citation type="journal article" date="2010" name="Appl. Environ. Microbiol.">
        <title>Conserved symbiotic plasmid DNA sequences in the multireplicon pangenomic structure of Rhizobium etli.</title>
        <authorList>
            <person name="Gonzalez V."/>
            <person name="Acosta J.L."/>
            <person name="Santamaria R.I."/>
            <person name="Bustos P."/>
            <person name="Fernandez J.L."/>
            <person name="Hernandez Gonzalez I.L."/>
            <person name="Diaz R."/>
            <person name="Flores M."/>
            <person name="Palacios R."/>
            <person name="Mora J."/>
            <person name="Davila G."/>
        </authorList>
    </citation>
    <scope>NUCLEOTIDE SEQUENCE [LARGE SCALE GENOMIC DNA]</scope>
    <source>
        <strain>CIAT 652</strain>
    </source>
</reference>
<dbReference type="EMBL" id="CP001074">
    <property type="protein sequence ID" value="ACE89389.1"/>
    <property type="molecule type" value="Genomic_DNA"/>
</dbReference>
<dbReference type="SMR" id="B3PZ95"/>
<dbReference type="KEGG" id="rec:RHECIAT_CH0000395"/>
<dbReference type="eggNOG" id="COG0268">
    <property type="taxonomic scope" value="Bacteria"/>
</dbReference>
<dbReference type="HOGENOM" id="CLU_160655_3_0_5"/>
<dbReference type="Proteomes" id="UP000008817">
    <property type="component" value="Chromosome"/>
</dbReference>
<dbReference type="GO" id="GO:0005829">
    <property type="term" value="C:cytosol"/>
    <property type="evidence" value="ECO:0007669"/>
    <property type="project" value="TreeGrafter"/>
</dbReference>
<dbReference type="GO" id="GO:0015935">
    <property type="term" value="C:small ribosomal subunit"/>
    <property type="evidence" value="ECO:0007669"/>
    <property type="project" value="TreeGrafter"/>
</dbReference>
<dbReference type="GO" id="GO:0070181">
    <property type="term" value="F:small ribosomal subunit rRNA binding"/>
    <property type="evidence" value="ECO:0007669"/>
    <property type="project" value="TreeGrafter"/>
</dbReference>
<dbReference type="GO" id="GO:0003735">
    <property type="term" value="F:structural constituent of ribosome"/>
    <property type="evidence" value="ECO:0007669"/>
    <property type="project" value="InterPro"/>
</dbReference>
<dbReference type="GO" id="GO:0006412">
    <property type="term" value="P:translation"/>
    <property type="evidence" value="ECO:0007669"/>
    <property type="project" value="UniProtKB-UniRule"/>
</dbReference>
<dbReference type="FunFam" id="1.20.58.110:FF:000001">
    <property type="entry name" value="30S ribosomal protein S20"/>
    <property type="match status" value="1"/>
</dbReference>
<dbReference type="Gene3D" id="1.20.58.110">
    <property type="entry name" value="Ribosomal protein S20"/>
    <property type="match status" value="1"/>
</dbReference>
<dbReference type="HAMAP" id="MF_00500">
    <property type="entry name" value="Ribosomal_bS20"/>
    <property type="match status" value="1"/>
</dbReference>
<dbReference type="InterPro" id="IPR002583">
    <property type="entry name" value="Ribosomal_bS20"/>
</dbReference>
<dbReference type="InterPro" id="IPR036510">
    <property type="entry name" value="Ribosomal_bS20_sf"/>
</dbReference>
<dbReference type="NCBIfam" id="TIGR00029">
    <property type="entry name" value="S20"/>
    <property type="match status" value="1"/>
</dbReference>
<dbReference type="PANTHER" id="PTHR33398">
    <property type="entry name" value="30S RIBOSOMAL PROTEIN S20"/>
    <property type="match status" value="1"/>
</dbReference>
<dbReference type="PANTHER" id="PTHR33398:SF1">
    <property type="entry name" value="SMALL RIBOSOMAL SUBUNIT PROTEIN BS20C"/>
    <property type="match status" value="1"/>
</dbReference>
<dbReference type="Pfam" id="PF01649">
    <property type="entry name" value="Ribosomal_S20p"/>
    <property type="match status" value="1"/>
</dbReference>
<dbReference type="SUPFAM" id="SSF46992">
    <property type="entry name" value="Ribosomal protein S20"/>
    <property type="match status" value="1"/>
</dbReference>
<accession>B3PZ95</accession>
<organism>
    <name type="scientific">Rhizobium etli (strain CIAT 652)</name>
    <dbReference type="NCBI Taxonomy" id="491916"/>
    <lineage>
        <taxon>Bacteria</taxon>
        <taxon>Pseudomonadati</taxon>
        <taxon>Pseudomonadota</taxon>
        <taxon>Alphaproteobacteria</taxon>
        <taxon>Hyphomicrobiales</taxon>
        <taxon>Rhizobiaceae</taxon>
        <taxon>Rhizobium/Agrobacterium group</taxon>
        <taxon>Rhizobium</taxon>
    </lineage>
</organism>
<gene>
    <name evidence="1" type="primary">rpsT</name>
    <name type="ordered locus">RHECIAT_CH0000395</name>
</gene>
<evidence type="ECO:0000255" key="1">
    <source>
        <dbReference type="HAMAP-Rule" id="MF_00500"/>
    </source>
</evidence>
<evidence type="ECO:0000256" key="2">
    <source>
        <dbReference type="SAM" id="MobiDB-lite"/>
    </source>
</evidence>
<evidence type="ECO:0000305" key="3"/>